<keyword id="KW-0053">Apoptosis</keyword>
<keyword id="KW-0256">Endoplasmic reticulum</keyword>
<keyword id="KW-0472">Membrane</keyword>
<keyword id="KW-0539">Nucleus</keyword>
<keyword id="KW-1185">Reference proteome</keyword>
<keyword id="KW-0812">Transmembrane</keyword>
<keyword id="KW-1133">Transmembrane helix</keyword>
<protein>
    <recommendedName>
        <fullName>Protein shisa-5</fullName>
    </recommendedName>
    <alternativeName>
        <fullName>Scotin</fullName>
    </alternativeName>
</protein>
<gene>
    <name type="primary">Shisa5</name>
    <name type="synonym">Scotin</name>
    <name type="ORF">RCJMB04_23m20</name>
</gene>
<evidence type="ECO:0000250" key="1"/>
<evidence type="ECO:0000255" key="2"/>
<evidence type="ECO:0000305" key="3"/>
<comment type="function">
    <text evidence="1">Can induce apoptosis in a caspase-dependent manner and plays a role in p53/TP53-dependent apoptosis.</text>
</comment>
<comment type="subcellular location">
    <subcellularLocation>
        <location evidence="1">Endoplasmic reticulum membrane</location>
        <topology evidence="1">Single-pass type I membrane protein</topology>
    </subcellularLocation>
    <subcellularLocation>
        <location evidence="1">Nucleus membrane</location>
    </subcellularLocation>
</comment>
<comment type="domain">
    <text evidence="1">The proline-rich region is required for endoplasmic reticulum localization.</text>
</comment>
<comment type="similarity">
    <text evidence="3">Belongs to the shisa family.</text>
</comment>
<accession>Q5ZIS9</accession>
<dbReference type="EMBL" id="AJ720705">
    <property type="protein sequence ID" value="CAG32364.1"/>
    <property type="molecule type" value="mRNA"/>
</dbReference>
<dbReference type="RefSeq" id="NP_001025762.1">
    <property type="nucleotide sequence ID" value="NM_001030591.2"/>
</dbReference>
<dbReference type="SMR" id="Q5ZIS9"/>
<dbReference type="FunCoup" id="Q5ZIS9">
    <property type="interactions" value="64"/>
</dbReference>
<dbReference type="STRING" id="9031.ENSGALP00000057667"/>
<dbReference type="PaxDb" id="9031-ENSGALP00000007414"/>
<dbReference type="GeneID" id="415948"/>
<dbReference type="KEGG" id="gga:415948"/>
<dbReference type="CTD" id="51246"/>
<dbReference type="VEuPathDB" id="HostDB:geneid_415948"/>
<dbReference type="eggNOG" id="ENOG502S2Y4">
    <property type="taxonomic scope" value="Eukaryota"/>
</dbReference>
<dbReference type="InParanoid" id="Q5ZIS9"/>
<dbReference type="OrthoDB" id="9949323at2759"/>
<dbReference type="PhylomeDB" id="Q5ZIS9"/>
<dbReference type="PRO" id="PR:Q5ZIS9"/>
<dbReference type="Proteomes" id="UP000000539">
    <property type="component" value="Unassembled WGS sequence"/>
</dbReference>
<dbReference type="GO" id="GO:0005789">
    <property type="term" value="C:endoplasmic reticulum membrane"/>
    <property type="evidence" value="ECO:0007669"/>
    <property type="project" value="UniProtKB-SubCell"/>
</dbReference>
<dbReference type="GO" id="GO:0031965">
    <property type="term" value="C:nuclear membrane"/>
    <property type="evidence" value="ECO:0007669"/>
    <property type="project" value="UniProtKB-SubCell"/>
</dbReference>
<dbReference type="GO" id="GO:0006915">
    <property type="term" value="P:apoptotic process"/>
    <property type="evidence" value="ECO:0007669"/>
    <property type="project" value="UniProtKB-KW"/>
</dbReference>
<dbReference type="InterPro" id="IPR026910">
    <property type="entry name" value="Shisa"/>
</dbReference>
<dbReference type="PANTHER" id="PTHR31395:SF14">
    <property type="entry name" value="PROTEIN SHISA-5"/>
    <property type="match status" value="1"/>
</dbReference>
<dbReference type="PANTHER" id="PTHR31395">
    <property type="entry name" value="SHISA"/>
    <property type="match status" value="1"/>
</dbReference>
<proteinExistence type="evidence at transcript level"/>
<organism>
    <name type="scientific">Gallus gallus</name>
    <name type="common">Chicken</name>
    <dbReference type="NCBI Taxonomy" id="9031"/>
    <lineage>
        <taxon>Eukaryota</taxon>
        <taxon>Metazoa</taxon>
        <taxon>Chordata</taxon>
        <taxon>Craniata</taxon>
        <taxon>Vertebrata</taxon>
        <taxon>Euteleostomi</taxon>
        <taxon>Archelosauria</taxon>
        <taxon>Archosauria</taxon>
        <taxon>Dinosauria</taxon>
        <taxon>Saurischia</taxon>
        <taxon>Theropoda</taxon>
        <taxon>Coelurosauria</taxon>
        <taxon>Aves</taxon>
        <taxon>Neognathae</taxon>
        <taxon>Galloanserae</taxon>
        <taxon>Galliformes</taxon>
        <taxon>Phasianidae</taxon>
        <taxon>Phasianinae</taxon>
        <taxon>Gallus</taxon>
    </lineage>
</organism>
<reference key="1">
    <citation type="journal article" date="2005" name="Genome Biol.">
        <title>Full-length cDNAs from chicken bursal lymphocytes to facilitate gene function analysis.</title>
        <authorList>
            <person name="Caldwell R.B."/>
            <person name="Kierzek A.M."/>
            <person name="Arakawa H."/>
            <person name="Bezzubov Y."/>
            <person name="Zaim J."/>
            <person name="Fiedler P."/>
            <person name="Kutter S."/>
            <person name="Blagodatski A."/>
            <person name="Kostovska D."/>
            <person name="Koter M."/>
            <person name="Plachy J."/>
            <person name="Carninci P."/>
            <person name="Hayashizaki Y."/>
            <person name="Buerstedde J.-M."/>
        </authorList>
    </citation>
    <scope>NUCLEOTIDE SEQUENCE [LARGE SCALE MRNA]</scope>
    <source>
        <strain>CB</strain>
        <tissue>Bursa of Fabricius</tissue>
    </source>
</reference>
<name>SHSA5_CHICK</name>
<sequence length="139" mass="14847">MGFGTLVAIGVIVFAVVVITIILCLTCSCCCLYKACRRPQPVVTTTTATTVVHAPYPQQQGVPPSYPAAPYQGYQPVAIQPQPGMPVAPYPAQYPPPYPMQPPDPPAYHETVAAGAGAPYPISQPPYNPAYMDPQKPTY</sequence>
<feature type="chain" id="PRO_0000312882" description="Protein shisa-5">
    <location>
        <begin position="1"/>
        <end position="139"/>
    </location>
</feature>
<feature type="transmembrane region" description="Helical" evidence="2">
    <location>
        <begin position="3"/>
        <end position="23"/>
    </location>
</feature>